<comment type="function">
    <text evidence="5">Secreted effector that acts as an elicitor of hypersensitive response (HR) specifically on plants carrying defense protein R4, through its interaction with this protein.</text>
</comment>
<comment type="subcellular location">
    <subcellularLocation>
        <location evidence="1">Secreted</location>
    </subcellularLocation>
    <subcellularLocation>
        <location evidence="1">Host cytoplasm</location>
    </subcellularLocation>
    <subcellularLocation>
        <location evidence="1">Host nucleus</location>
    </subcellularLocation>
    <subcellularLocation>
        <location evidence="1">Host nucleus</location>
        <location evidence="1">Host nucleolus</location>
    </subcellularLocation>
    <subcellularLocation>
        <location evidence="1">Host cytoplasm</location>
        <location evidence="1">Host cytoskeleton</location>
    </subcellularLocation>
</comment>
<comment type="domain">
    <text evidence="8">Oomycete Avh family proteins have a modular structure with an N-terminal signal peptide (SP), an RXLR-dEER domain and a C-terminus with a variable number of modules that consist of W, Y and L motifs after highly conserved residues. The C-ter of Avr4 contains 3 W motifs, 1 Y motif but no L motif. The RXLR-dEER motif functions as a host targeting signal (HTS). The region containing the W2 motif, in combination with either the W1 or W3 motif, triggers a necrotic response in host plants carrying the resistance gene R4.</text>
</comment>
<comment type="similarity">
    <text evidence="7">Belongs to the RxLR effector family.</text>
</comment>
<organism>
    <name type="scientific">Phytophthora mirabilis</name>
    <dbReference type="NCBI Taxonomy" id="129356"/>
    <lineage>
        <taxon>Eukaryota</taxon>
        <taxon>Sar</taxon>
        <taxon>Stramenopiles</taxon>
        <taxon>Oomycota</taxon>
        <taxon>Peronosporales</taxon>
        <taxon>Peronosporaceae</taxon>
        <taxon>Phytophthora</taxon>
    </lineage>
</organism>
<keyword id="KW-0325">Glycoprotein</keyword>
<keyword id="KW-1035">Host cytoplasm</keyword>
<keyword id="KW-1037">Host cytoskeleton</keyword>
<keyword id="KW-1048">Host nucleus</keyword>
<keyword id="KW-0964">Secreted</keyword>
<keyword id="KW-0732">Signal</keyword>
<name>AVH4_PHYMI</name>
<feature type="signal peptide" evidence="2">
    <location>
        <begin position="1"/>
        <end position="24"/>
    </location>
</feature>
<feature type="chain" id="PRO_5002953493" description="RxLR effector protein Avr4" evidence="2">
    <location>
        <begin position="25"/>
        <end position="290"/>
    </location>
</feature>
<feature type="region of interest" description="Disordered" evidence="4">
    <location>
        <begin position="33"/>
        <end position="56"/>
    </location>
</feature>
<feature type="region of interest" description="W1 motif" evidence="8">
    <location>
        <begin position="118"/>
        <end position="141"/>
    </location>
</feature>
<feature type="region of interest" description="W2 motif" evidence="8">
    <location>
        <begin position="151"/>
        <end position="174"/>
    </location>
</feature>
<feature type="region of interest" description="W3 motif" evidence="8">
    <location>
        <begin position="224"/>
        <end position="247"/>
    </location>
</feature>
<feature type="region of interest" description="Y motif" evidence="8">
    <location>
        <begin position="249"/>
        <end position="270"/>
    </location>
</feature>
<feature type="short sequence motif" description="RxLR-dEER" evidence="8">
    <location>
        <begin position="42"/>
        <end position="58"/>
    </location>
</feature>
<feature type="compositionally biased region" description="Basic and acidic residues" evidence="4">
    <location>
        <begin position="36"/>
        <end position="45"/>
    </location>
</feature>
<feature type="glycosylation site" description="N-linked (GlcNAc...) asparagine" evidence="3">
    <location>
        <position position="246"/>
    </location>
</feature>
<proteinExistence type="inferred from homology"/>
<protein>
    <recommendedName>
        <fullName evidence="6">RxLR effector protein Avr4</fullName>
    </recommendedName>
    <alternativeName>
        <fullName evidence="6">Avirulence homolog protein 4</fullName>
    </alternativeName>
</protein>
<dbReference type="EMBL" id="FJ951909">
    <property type="protein sequence ID" value="ACR10586.1"/>
    <property type="molecule type" value="Genomic_DNA"/>
</dbReference>
<dbReference type="SMR" id="C5IL49"/>
<dbReference type="GlyCosmos" id="C5IL49">
    <property type="glycosylation" value="1 site, No reported glycans"/>
</dbReference>
<dbReference type="GO" id="GO:0005576">
    <property type="term" value="C:extracellular region"/>
    <property type="evidence" value="ECO:0007669"/>
    <property type="project" value="UniProtKB-SubCell"/>
</dbReference>
<dbReference type="GO" id="GO:0030430">
    <property type="term" value="C:host cell cytoplasm"/>
    <property type="evidence" value="ECO:0007669"/>
    <property type="project" value="UniProtKB-SubCell"/>
</dbReference>
<dbReference type="GO" id="GO:0044196">
    <property type="term" value="C:host cell nucleolus"/>
    <property type="evidence" value="ECO:0007669"/>
    <property type="project" value="UniProtKB-SubCell"/>
</dbReference>
<dbReference type="GO" id="GO:0044163">
    <property type="term" value="C:host cytoskeleton"/>
    <property type="evidence" value="ECO:0007669"/>
    <property type="project" value="UniProtKB-SubCell"/>
</dbReference>
<reference key="1">
    <citation type="journal article" date="2009" name="Mol. Plant Pathol.">
        <title>Recognition of Phytophthora infestans Avr4 by potato R4 is triggered by C-terminal domains comprising W motifs.</title>
        <authorList>
            <person name="Van Poppel P.M."/>
            <person name="Jiang R.H."/>
            <person name="Sliwka J."/>
            <person name="Govers F."/>
        </authorList>
    </citation>
    <scope>NUCLEOTIDE SEQUENCE [GENOMIC DNA]</scope>
    <scope>FUNCTION</scope>
    <scope>DOMAIN</scope>
    <source>
        <strain>PIC 99111</strain>
    </source>
</reference>
<evidence type="ECO:0000250" key="1">
    <source>
        <dbReference type="UniProtKB" id="B1NNT7"/>
    </source>
</evidence>
<evidence type="ECO:0000255" key="2"/>
<evidence type="ECO:0000255" key="3">
    <source>
        <dbReference type="PROSITE-ProRule" id="PRU00498"/>
    </source>
</evidence>
<evidence type="ECO:0000256" key="4">
    <source>
        <dbReference type="SAM" id="MobiDB-lite"/>
    </source>
</evidence>
<evidence type="ECO:0000269" key="5">
    <source>
    </source>
</evidence>
<evidence type="ECO:0000303" key="6">
    <source>
    </source>
</evidence>
<evidence type="ECO:0000305" key="7"/>
<evidence type="ECO:0000305" key="8">
    <source>
    </source>
</evidence>
<accession>C5IL49</accession>
<gene>
    <name evidence="6" type="primary">Avh4</name>
</gene>
<sequence length="290" mass="33350">MRSLHILLVITASLLASLAVSAEADPSTRTANVVENNKDKSRFLRDGGTTEAQTDEERATITLGDKVVSDKAATKDLLERLLALGTPLKTVQKEFLNMPLIKTFAELSKHPNWRALDKYERMQWQKLNEGQTLTYMRVGDRSYSKEKAQEQLLRWVAQKKTVKSVYDDLQIEGFARNTDAARLNWRAYNMYDKWFTAASQMQRNPQQYAKFGTGYHSEQKTTEVFEKWAMEGTHIKSVIKTLNLNNKSASEMANNENFPALLKYVKLYLDFKPFRDLNAKSRLQARRPIS</sequence>